<organism>
    <name type="scientific">Sendai virus (strain Harris)</name>
    <name type="common">SeV</name>
    <dbReference type="NCBI Taxonomy" id="11196"/>
    <lineage>
        <taxon>Viruses</taxon>
        <taxon>Riboviria</taxon>
        <taxon>Orthornavirae</taxon>
        <taxon>Negarnaviricota</taxon>
        <taxon>Haploviricotina</taxon>
        <taxon>Monjiviricetes</taxon>
        <taxon>Mononegavirales</taxon>
        <taxon>Paramyxoviridae</taxon>
        <taxon>Feraresvirinae</taxon>
        <taxon>Respirovirus</taxon>
        <taxon>Respirovirus muris</taxon>
    </lineage>
</organism>
<comment type="function">
    <text evidence="2 4">Plays an essential role in the inhibition of host immune response. Prevents the establishment of cellular antiviral state by blocking interferon-alpha/beta (IFN-alpha/beta) production and signaling pathway. Interacts with host IFIH1/MDA5 and DHX58/LGP2 to inhibit the transduction pathway involved in the activation of IFN-beta promoter, thus protecting the virus against cell antiviral state (PubMed:15563593). Also interacts with and inhibits host IRF3 (By similarity). Blocks the type I interferon signaling pathway by disrupting the RIG-I signaling pathway (By similarity).</text>
</comment>
<comment type="subunit">
    <text evidence="2">Interacts with host IFIH1/MDA5 and DHX58/LGP2. Interacts with host IRF3. Interacts with host RIGI regulatory protein (via CARDs domain) and host TRIM25 (via SPRY domain); these interactions prevent TRIM25-mediated ubiquitination of RIG-I and disrupts downstream RIG-I signaling.</text>
</comment>
<comment type="subcellular location">
    <subcellularLocation>
        <location evidence="1">Host cytoplasm</location>
    </subcellularLocation>
</comment>
<comment type="domain">
    <text>The C-terminal zinc-binding domain is involved in binding to IFIH1/MDA5. This domain is also involved in viral pathogenesis.</text>
</comment>
<comment type="RNA editing">
    <location>
        <position position="318" evidence="5 6"/>
    </location>
    <text>Partially edited. RNA editing at this position consists of an insertion of one or two guanine nucleotides. The sequence displayed here is the V protein, derived from the +1G edited RNA. The unedited RNA gives rise to the P protein (AC P04859), the +2G edited RNA gives rise to the W protein (AC P69281).</text>
</comment>
<comment type="miscellaneous">
    <text>The P/V/C gene has two overlapping open reading frames. One encodes the P/V/W proteins and the other the C/Y proteins.</text>
</comment>
<comment type="similarity">
    <text evidence="7">Belongs to the paramyxoviruses V protein family.</text>
</comment>
<evidence type="ECO:0000250" key="1"/>
<evidence type="ECO:0000250" key="2">
    <source>
        <dbReference type="UniProtKB" id="P69282"/>
    </source>
</evidence>
<evidence type="ECO:0000256" key="3">
    <source>
        <dbReference type="SAM" id="MobiDB-lite"/>
    </source>
</evidence>
<evidence type="ECO:0000269" key="4">
    <source>
    </source>
</evidence>
<evidence type="ECO:0000269" key="5">
    <source>
    </source>
</evidence>
<evidence type="ECO:0000269" key="6">
    <source>
    </source>
</evidence>
<evidence type="ECO:0000305" key="7"/>
<organismHost>
    <name type="scientific">Cavia cutleri</name>
    <name type="common">Guinea pig</name>
    <dbReference type="NCBI Taxonomy" id="10144"/>
</organismHost>
<organismHost>
    <name type="scientific">Cricetidae sp.</name>
    <name type="common">Hamster</name>
    <dbReference type="NCBI Taxonomy" id="36483"/>
</organismHost>
<organismHost>
    <name type="scientific">Mus musculus</name>
    <name type="common">Mouse</name>
    <dbReference type="NCBI Taxonomy" id="10090"/>
</organismHost>
<organismHost>
    <name type="scientific">Rattus norvegicus</name>
    <name type="common">Rat</name>
    <dbReference type="NCBI Taxonomy" id="10116"/>
</organismHost>
<sequence>MDQDAFILKEDSEVEREAPGGRESLSDVIGFLDAVLSSEPTDIGGDRSWLHNTINTPQGPGSAHRAKSEGEGEVSTPSTQDNRSGEESRVSGRTSKPEAEAHAGNLDKQNIHRAFGGRTGTNSVSQDLGDGGDSGILENPPNERGYPRSGIEDENREMAAHPDKRGEDQAEGLPEEVRGGTSLPDEGEGGASNNGRSMEPGSSHSARVTGVLVIPSPELEEAVLRRNKRRPTNSGSKPLTPATVPGTRSPPLNRYNSTGSPPGKPPSTQDEHINSGDTPAVRVKDRKPPIGTRSVSDCPANGRPIHPGLESDSTKKGHRREHIIYERDGYIVDESWCNPVCSRIRIIPRRELCVCKTCPKVCKLCRDDIQCMRPDPFCREIFRS</sequence>
<accession>P69280</accession>
<keyword id="KW-1035">Host cytoplasm</keyword>
<keyword id="KW-0945">Host-virus interaction</keyword>
<keyword id="KW-1090">Inhibition of host innate immune response by virus</keyword>
<keyword id="KW-1092">Inhibition of host IRF3 by virus</keyword>
<keyword id="KW-1089">Inhibition of host MDA5 by virus</keyword>
<keyword id="KW-1113">Inhibition of host RLR pathway by virus</keyword>
<keyword id="KW-0922">Interferon antiviral system evasion</keyword>
<keyword id="KW-0479">Metal-binding</keyword>
<keyword id="KW-0597">Phosphoprotein</keyword>
<keyword id="KW-0691">RNA editing</keyword>
<keyword id="KW-0899">Viral immunoevasion</keyword>
<keyword id="KW-0862">Zinc</keyword>
<feature type="chain" id="PRO_0000142827" description="Protein V">
    <location>
        <begin position="1"/>
        <end position="384"/>
    </location>
</feature>
<feature type="region of interest" description="Disordered" evidence="3">
    <location>
        <begin position="1"/>
        <end position="23"/>
    </location>
</feature>
<feature type="region of interest" description="Disordered" evidence="3">
    <location>
        <begin position="38"/>
        <end position="318"/>
    </location>
</feature>
<feature type="compositionally biased region" description="Basic and acidic residues" evidence="3">
    <location>
        <begin position="7"/>
        <end position="20"/>
    </location>
</feature>
<feature type="compositionally biased region" description="Polar residues" evidence="3">
    <location>
        <begin position="50"/>
        <end position="59"/>
    </location>
</feature>
<feature type="compositionally biased region" description="Basic and acidic residues" evidence="3">
    <location>
        <begin position="83"/>
        <end position="101"/>
    </location>
</feature>
<feature type="compositionally biased region" description="Basic and acidic residues" evidence="3">
    <location>
        <begin position="150"/>
        <end position="168"/>
    </location>
</feature>
<feature type="compositionally biased region" description="Polar residues" evidence="3">
    <location>
        <begin position="191"/>
        <end position="206"/>
    </location>
</feature>
<feature type="binding site" evidence="1">
    <location>
        <position position="318"/>
    </location>
    <ligand>
        <name>Zn(2+)</name>
        <dbReference type="ChEBI" id="CHEBI:29105"/>
        <label>1</label>
    </ligand>
</feature>
<feature type="binding site" evidence="1">
    <location>
        <position position="337"/>
    </location>
    <ligand>
        <name>Zn(2+)</name>
        <dbReference type="ChEBI" id="CHEBI:29105"/>
        <label>1</label>
    </ligand>
</feature>
<feature type="binding site" evidence="1">
    <location>
        <position position="341"/>
    </location>
    <ligand>
        <name>Zn(2+)</name>
        <dbReference type="ChEBI" id="CHEBI:29105"/>
        <label>2</label>
    </ligand>
</feature>
<feature type="binding site" evidence="1">
    <location>
        <position position="353"/>
    </location>
    <ligand>
        <name>Zn(2+)</name>
        <dbReference type="ChEBI" id="CHEBI:29105"/>
        <label>2</label>
    </ligand>
</feature>
<feature type="binding site" evidence="1">
    <location>
        <position position="355"/>
    </location>
    <ligand>
        <name>Zn(2+)</name>
        <dbReference type="ChEBI" id="CHEBI:29105"/>
        <label>2</label>
    </ligand>
</feature>
<feature type="binding site" evidence="1">
    <location>
        <position position="358"/>
    </location>
    <ligand>
        <name>Zn(2+)</name>
        <dbReference type="ChEBI" id="CHEBI:29105"/>
        <label>2</label>
    </ligand>
</feature>
<feature type="binding site" evidence="1">
    <location>
        <position position="362"/>
    </location>
    <ligand>
        <name>Zn(2+)</name>
        <dbReference type="ChEBI" id="CHEBI:29105"/>
        <label>1</label>
    </ligand>
</feature>
<feature type="binding site" evidence="1">
    <location>
        <position position="365"/>
    </location>
    <ligand>
        <name>Zn(2+)</name>
        <dbReference type="ChEBI" id="CHEBI:29105"/>
        <label>1</label>
    </ligand>
</feature>
<feature type="modified residue" description="Phosphoserine; by host" evidence="1">
    <location>
        <position position="68"/>
    </location>
</feature>
<feature type="modified residue" description="Phosphoserine; by host" evidence="1">
    <location>
        <position position="125"/>
    </location>
</feature>
<feature type="modified residue" description="Phosphoserine; by host" evidence="1">
    <location>
        <position position="192"/>
    </location>
</feature>
<feature type="modified residue" description="Phosphoserine; by host" evidence="1">
    <location>
        <position position="249"/>
    </location>
</feature>
<feature type="modified residue" description="Phosphoserine; by host" evidence="1">
    <location>
        <position position="257"/>
    </location>
</feature>
<feature type="modified residue" description="Phosphoserine; by host" evidence="1">
    <location>
        <position position="260"/>
    </location>
</feature>
<feature type="sequence variant">
    <original>S</original>
    <variation>T</variation>
    <location>
        <position position="311"/>
    </location>
</feature>
<reference key="1">
    <citation type="journal article" date="1983" name="Cell">
        <title>Sendai virus contains overlapping genes expressed from a single mRNA.</title>
        <authorList>
            <person name="Giorgi C."/>
            <person name="Blumberg B.M."/>
            <person name="Kolakofsky D."/>
        </authorList>
    </citation>
    <scope>NUCLEOTIDE SEQUENCE [GENOMIC RNA]</scope>
</reference>
<reference key="2">
    <citation type="submission" date="2005-01" db="UniProtKB">
        <authorList>
            <person name="Kolakofsky D."/>
        </authorList>
    </citation>
    <scope>NUCLEOTIDE SEQUENCE [GENOMIC RNA]</scope>
</reference>
<reference key="3">
    <citation type="journal article" date="1997" name="EMBO J.">
        <title>The paramyxovirus, Sendai virus, V protein encodes a luxury function required for viral pathogenesis.</title>
        <authorList>
            <person name="Kato A."/>
            <person name="Kiyotani K."/>
            <person name="Sakai Y."/>
            <person name="Yoshida T."/>
            <person name="Nagai Y."/>
        </authorList>
    </citation>
    <scope>RNA EDITING</scope>
</reference>
<reference key="4">
    <citation type="journal article" date="1998" name="Virology">
        <title>Sendai viruses with altered P, V, and W protein expression.</title>
        <authorList>
            <person name="Delenda C."/>
            <person name="Taylor G."/>
            <person name="Hausmann S."/>
            <person name="Garcin D."/>
            <person name="Kolakofsky D."/>
        </authorList>
    </citation>
    <scope>ZINC-BINDING DOMAIN</scope>
    <scope>RNA EDITING</scope>
</reference>
<reference key="5">
    <citation type="journal article" date="2004" name="Proc. Natl. Acad. Sci. U.S.A.">
        <title>The V proteins of paramyxoviruses bind the IFN-inducible RNA helicase, mda-5, and inhibit its activation of the IFN-beta promoter.</title>
        <authorList>
            <person name="Andrejeva J."/>
            <person name="Childs K.S."/>
            <person name="Young D.F."/>
            <person name="Carlos T.S."/>
            <person name="Stock N."/>
            <person name="Goodbourn S."/>
            <person name="Randall R.E."/>
        </authorList>
    </citation>
    <scope>INTERACTION WITH HUMAN IFIH1/MDA5</scope>
    <scope>FUNCTION</scope>
</reference>
<gene>
    <name type="primary">P/V/C</name>
</gene>
<dbReference type="SMR" id="P69280"/>
<dbReference type="GO" id="GO:0030430">
    <property type="term" value="C:host cell cytoplasm"/>
    <property type="evidence" value="ECO:0007669"/>
    <property type="project" value="UniProtKB-SubCell"/>
</dbReference>
<dbReference type="GO" id="GO:0046872">
    <property type="term" value="F:metal ion binding"/>
    <property type="evidence" value="ECO:0007669"/>
    <property type="project" value="UniProtKB-KW"/>
</dbReference>
<dbReference type="GO" id="GO:0039548">
    <property type="term" value="P:symbiont-mediated suppression of host cytoplasmic pattern recognition receptor signaling pathway via inhibition of IRF3 activity"/>
    <property type="evidence" value="ECO:0007669"/>
    <property type="project" value="UniProtKB-KW"/>
</dbReference>
<dbReference type="GO" id="GO:0039554">
    <property type="term" value="P:symbiont-mediated suppression of host cytoplasmic pattern recognition receptor signaling pathway via inhibition of MDA-5 activity"/>
    <property type="evidence" value="ECO:0007669"/>
    <property type="project" value="UniProtKB-KW"/>
</dbReference>
<dbReference type="FunFam" id="4.10.80.340:FF:000001">
    <property type="entry name" value="Protein V"/>
    <property type="match status" value="1"/>
</dbReference>
<dbReference type="Gene3D" id="4.10.80.340">
    <property type="match status" value="1"/>
</dbReference>
<dbReference type="InterPro" id="IPR024279">
    <property type="entry name" value="Paramyx_V_Zn-bd"/>
</dbReference>
<dbReference type="Pfam" id="PF13008">
    <property type="entry name" value="zf-Paramyx-P"/>
    <property type="match status" value="1"/>
</dbReference>
<protein>
    <recommendedName>
        <fullName>Protein V</fullName>
    </recommendedName>
</protein>
<name>V_SENDH</name>
<proteinExistence type="evidence at protein level"/>